<sequence length="362" mass="39771">MAQIFNFSSGPAMLPAEVLKQAQQELRDWNGLGTSVMEVSHRGKEFIQVAEEAEKDFRDLLNVPSNYKVLFCHGGGRGQFAAVPLNILGDKTTADYVDAGYWAASAIKEAKKYCTPNVFDAKVTVDGLRAVKPMSEWQLSDNAAYMHYCPNETIDGIAIDETPDFGKDVVVAADFSSTILSRPIDVSRYGVIYAGAQKNIGPAGLTIVIVREDLLGKANIACPSILDYSILNDNDSMFNTPPTFAWYLSGLVFKWLKANGGVAAMDKINQQKAELLYGVIDNSDFYRNDVAKANRSRMNVPFQLADSALDKLFLEESFAAGLHALKGHRVVGGMRASIYNAMPLEGVKALTDFMVEFERRHG</sequence>
<gene>
    <name evidence="1" type="primary">serC</name>
    <name type="ordered locus">ECED1_0934</name>
</gene>
<organism>
    <name type="scientific">Escherichia coli O81 (strain ED1a)</name>
    <dbReference type="NCBI Taxonomy" id="585397"/>
    <lineage>
        <taxon>Bacteria</taxon>
        <taxon>Pseudomonadati</taxon>
        <taxon>Pseudomonadota</taxon>
        <taxon>Gammaproteobacteria</taxon>
        <taxon>Enterobacterales</taxon>
        <taxon>Enterobacteriaceae</taxon>
        <taxon>Escherichia</taxon>
    </lineage>
</organism>
<evidence type="ECO:0000255" key="1">
    <source>
        <dbReference type="HAMAP-Rule" id="MF_00160"/>
    </source>
</evidence>
<keyword id="KW-0028">Amino-acid biosynthesis</keyword>
<keyword id="KW-0032">Aminotransferase</keyword>
<keyword id="KW-0963">Cytoplasm</keyword>
<keyword id="KW-0663">Pyridoxal phosphate</keyword>
<keyword id="KW-0664">Pyridoxine biosynthesis</keyword>
<keyword id="KW-0718">Serine biosynthesis</keyword>
<keyword id="KW-0808">Transferase</keyword>
<name>SERC_ECO81</name>
<proteinExistence type="inferred from homology"/>
<protein>
    <recommendedName>
        <fullName evidence="1">Phosphoserine aminotransferase</fullName>
        <ecNumber evidence="1">2.6.1.52</ecNumber>
    </recommendedName>
    <alternativeName>
        <fullName evidence="1">Phosphohydroxythreonine aminotransferase</fullName>
        <shortName evidence="1">PSAT</shortName>
    </alternativeName>
</protein>
<feature type="chain" id="PRO_1000203524" description="Phosphoserine aminotransferase">
    <location>
        <begin position="1"/>
        <end position="362"/>
    </location>
</feature>
<feature type="binding site" evidence="1">
    <location>
        <position position="9"/>
    </location>
    <ligand>
        <name>L-glutamate</name>
        <dbReference type="ChEBI" id="CHEBI:29985"/>
    </ligand>
</feature>
<feature type="binding site" evidence="1">
    <location>
        <position position="42"/>
    </location>
    <ligand>
        <name>L-glutamate</name>
        <dbReference type="ChEBI" id="CHEBI:29985"/>
    </ligand>
</feature>
<feature type="binding site" evidence="1">
    <location>
        <begin position="76"/>
        <end position="77"/>
    </location>
    <ligand>
        <name>pyridoxal 5'-phosphate</name>
        <dbReference type="ChEBI" id="CHEBI:597326"/>
    </ligand>
</feature>
<feature type="binding site" evidence="1">
    <location>
        <position position="102"/>
    </location>
    <ligand>
        <name>pyridoxal 5'-phosphate</name>
        <dbReference type="ChEBI" id="CHEBI:597326"/>
    </ligand>
</feature>
<feature type="binding site" evidence="1">
    <location>
        <position position="153"/>
    </location>
    <ligand>
        <name>pyridoxal 5'-phosphate</name>
        <dbReference type="ChEBI" id="CHEBI:597326"/>
    </ligand>
</feature>
<feature type="binding site" evidence="1">
    <location>
        <position position="174"/>
    </location>
    <ligand>
        <name>pyridoxal 5'-phosphate</name>
        <dbReference type="ChEBI" id="CHEBI:597326"/>
    </ligand>
</feature>
<feature type="binding site" evidence="1">
    <location>
        <position position="197"/>
    </location>
    <ligand>
        <name>pyridoxal 5'-phosphate</name>
        <dbReference type="ChEBI" id="CHEBI:597326"/>
    </ligand>
</feature>
<feature type="binding site" evidence="1">
    <location>
        <begin position="239"/>
        <end position="240"/>
    </location>
    <ligand>
        <name>pyridoxal 5'-phosphate</name>
        <dbReference type="ChEBI" id="CHEBI:597326"/>
    </ligand>
</feature>
<feature type="modified residue" description="N6-(pyridoxal phosphate)lysine" evidence="1">
    <location>
        <position position="198"/>
    </location>
</feature>
<comment type="function">
    <text evidence="1">Catalyzes the reversible conversion of 3-phosphohydroxypyruvate to phosphoserine and of 3-hydroxy-2-oxo-4-phosphonooxybutanoate to phosphohydroxythreonine.</text>
</comment>
<comment type="catalytic activity">
    <reaction evidence="1">
        <text>O-phospho-L-serine + 2-oxoglutarate = 3-phosphooxypyruvate + L-glutamate</text>
        <dbReference type="Rhea" id="RHEA:14329"/>
        <dbReference type="ChEBI" id="CHEBI:16810"/>
        <dbReference type="ChEBI" id="CHEBI:18110"/>
        <dbReference type="ChEBI" id="CHEBI:29985"/>
        <dbReference type="ChEBI" id="CHEBI:57524"/>
        <dbReference type="EC" id="2.6.1.52"/>
    </reaction>
</comment>
<comment type="catalytic activity">
    <reaction evidence="1">
        <text>4-(phosphooxy)-L-threonine + 2-oxoglutarate = (R)-3-hydroxy-2-oxo-4-phosphooxybutanoate + L-glutamate</text>
        <dbReference type="Rhea" id="RHEA:16573"/>
        <dbReference type="ChEBI" id="CHEBI:16810"/>
        <dbReference type="ChEBI" id="CHEBI:29985"/>
        <dbReference type="ChEBI" id="CHEBI:58452"/>
        <dbReference type="ChEBI" id="CHEBI:58538"/>
        <dbReference type="EC" id="2.6.1.52"/>
    </reaction>
</comment>
<comment type="cofactor">
    <cofactor evidence="1">
        <name>pyridoxal 5'-phosphate</name>
        <dbReference type="ChEBI" id="CHEBI:597326"/>
    </cofactor>
    <text evidence="1">Binds 1 pyridoxal phosphate per subunit.</text>
</comment>
<comment type="pathway">
    <text evidence="1">Amino-acid biosynthesis; L-serine biosynthesis; L-serine from 3-phospho-D-glycerate: step 2/3.</text>
</comment>
<comment type="pathway">
    <text evidence="1">Cofactor biosynthesis; pyridoxine 5'-phosphate biosynthesis; pyridoxine 5'-phosphate from D-erythrose 4-phosphate: step 3/5.</text>
</comment>
<comment type="subunit">
    <text evidence="1">Homodimer.</text>
</comment>
<comment type="subcellular location">
    <subcellularLocation>
        <location evidence="1">Cytoplasm</location>
    </subcellularLocation>
</comment>
<comment type="similarity">
    <text evidence="1">Belongs to the class-V pyridoxal-phosphate-dependent aminotransferase family. SerC subfamily.</text>
</comment>
<accession>B7MS22</accession>
<reference key="1">
    <citation type="journal article" date="2009" name="PLoS Genet.">
        <title>Organised genome dynamics in the Escherichia coli species results in highly diverse adaptive paths.</title>
        <authorList>
            <person name="Touchon M."/>
            <person name="Hoede C."/>
            <person name="Tenaillon O."/>
            <person name="Barbe V."/>
            <person name="Baeriswyl S."/>
            <person name="Bidet P."/>
            <person name="Bingen E."/>
            <person name="Bonacorsi S."/>
            <person name="Bouchier C."/>
            <person name="Bouvet O."/>
            <person name="Calteau A."/>
            <person name="Chiapello H."/>
            <person name="Clermont O."/>
            <person name="Cruveiller S."/>
            <person name="Danchin A."/>
            <person name="Diard M."/>
            <person name="Dossat C."/>
            <person name="Karoui M.E."/>
            <person name="Frapy E."/>
            <person name="Garry L."/>
            <person name="Ghigo J.M."/>
            <person name="Gilles A.M."/>
            <person name="Johnson J."/>
            <person name="Le Bouguenec C."/>
            <person name="Lescat M."/>
            <person name="Mangenot S."/>
            <person name="Martinez-Jehanne V."/>
            <person name="Matic I."/>
            <person name="Nassif X."/>
            <person name="Oztas S."/>
            <person name="Petit M.A."/>
            <person name="Pichon C."/>
            <person name="Rouy Z."/>
            <person name="Ruf C.S."/>
            <person name="Schneider D."/>
            <person name="Tourret J."/>
            <person name="Vacherie B."/>
            <person name="Vallenet D."/>
            <person name="Medigue C."/>
            <person name="Rocha E.P.C."/>
            <person name="Denamur E."/>
        </authorList>
    </citation>
    <scope>NUCLEOTIDE SEQUENCE [LARGE SCALE GENOMIC DNA]</scope>
    <source>
        <strain>ED1a</strain>
    </source>
</reference>
<dbReference type="EC" id="2.6.1.52" evidence="1"/>
<dbReference type="EMBL" id="CU928162">
    <property type="protein sequence ID" value="CAR07136.1"/>
    <property type="molecule type" value="Genomic_DNA"/>
</dbReference>
<dbReference type="RefSeq" id="WP_000057158.1">
    <property type="nucleotide sequence ID" value="NC_011745.1"/>
</dbReference>
<dbReference type="SMR" id="B7MS22"/>
<dbReference type="KEGG" id="ecq:ECED1_0934"/>
<dbReference type="HOGENOM" id="CLU_034866_0_2_6"/>
<dbReference type="UniPathway" id="UPA00135">
    <property type="reaction ID" value="UER00197"/>
</dbReference>
<dbReference type="UniPathway" id="UPA00244">
    <property type="reaction ID" value="UER00311"/>
</dbReference>
<dbReference type="Proteomes" id="UP000000748">
    <property type="component" value="Chromosome"/>
</dbReference>
<dbReference type="GO" id="GO:0005737">
    <property type="term" value="C:cytoplasm"/>
    <property type="evidence" value="ECO:0007669"/>
    <property type="project" value="UniProtKB-SubCell"/>
</dbReference>
<dbReference type="GO" id="GO:0004648">
    <property type="term" value="F:O-phospho-L-serine:2-oxoglutarate aminotransferase activity"/>
    <property type="evidence" value="ECO:0007669"/>
    <property type="project" value="UniProtKB-UniRule"/>
</dbReference>
<dbReference type="GO" id="GO:0030170">
    <property type="term" value="F:pyridoxal phosphate binding"/>
    <property type="evidence" value="ECO:0007669"/>
    <property type="project" value="UniProtKB-UniRule"/>
</dbReference>
<dbReference type="GO" id="GO:0006564">
    <property type="term" value="P:L-serine biosynthetic process"/>
    <property type="evidence" value="ECO:0007669"/>
    <property type="project" value="UniProtKB-UniRule"/>
</dbReference>
<dbReference type="GO" id="GO:0008615">
    <property type="term" value="P:pyridoxine biosynthetic process"/>
    <property type="evidence" value="ECO:0007669"/>
    <property type="project" value="UniProtKB-UniRule"/>
</dbReference>
<dbReference type="CDD" id="cd00611">
    <property type="entry name" value="PSAT_like"/>
    <property type="match status" value="1"/>
</dbReference>
<dbReference type="FunFam" id="3.40.640.10:FF:000010">
    <property type="entry name" value="Phosphoserine aminotransferase"/>
    <property type="match status" value="1"/>
</dbReference>
<dbReference type="FunFam" id="3.90.1150.10:FF:000006">
    <property type="entry name" value="Phosphoserine aminotransferase"/>
    <property type="match status" value="1"/>
</dbReference>
<dbReference type="Gene3D" id="3.90.1150.10">
    <property type="entry name" value="Aspartate Aminotransferase, domain 1"/>
    <property type="match status" value="1"/>
</dbReference>
<dbReference type="Gene3D" id="3.40.640.10">
    <property type="entry name" value="Type I PLP-dependent aspartate aminotransferase-like (Major domain)"/>
    <property type="match status" value="1"/>
</dbReference>
<dbReference type="HAMAP" id="MF_00160">
    <property type="entry name" value="SerC_aminotrans_5"/>
    <property type="match status" value="1"/>
</dbReference>
<dbReference type="InterPro" id="IPR000192">
    <property type="entry name" value="Aminotrans_V_dom"/>
</dbReference>
<dbReference type="InterPro" id="IPR020578">
    <property type="entry name" value="Aminotrans_V_PyrdxlP_BS"/>
</dbReference>
<dbReference type="InterPro" id="IPR022278">
    <property type="entry name" value="Pser_aminoTfrase"/>
</dbReference>
<dbReference type="InterPro" id="IPR015424">
    <property type="entry name" value="PyrdxlP-dep_Trfase"/>
</dbReference>
<dbReference type="InterPro" id="IPR015421">
    <property type="entry name" value="PyrdxlP-dep_Trfase_major"/>
</dbReference>
<dbReference type="InterPro" id="IPR015422">
    <property type="entry name" value="PyrdxlP-dep_Trfase_small"/>
</dbReference>
<dbReference type="NCBIfam" id="NF003764">
    <property type="entry name" value="PRK05355.1"/>
    <property type="match status" value="1"/>
</dbReference>
<dbReference type="NCBIfam" id="TIGR01364">
    <property type="entry name" value="serC_1"/>
    <property type="match status" value="1"/>
</dbReference>
<dbReference type="PANTHER" id="PTHR43247">
    <property type="entry name" value="PHOSPHOSERINE AMINOTRANSFERASE"/>
    <property type="match status" value="1"/>
</dbReference>
<dbReference type="PANTHER" id="PTHR43247:SF1">
    <property type="entry name" value="PHOSPHOSERINE AMINOTRANSFERASE"/>
    <property type="match status" value="1"/>
</dbReference>
<dbReference type="Pfam" id="PF00266">
    <property type="entry name" value="Aminotran_5"/>
    <property type="match status" value="1"/>
</dbReference>
<dbReference type="PIRSF" id="PIRSF000525">
    <property type="entry name" value="SerC"/>
    <property type="match status" value="1"/>
</dbReference>
<dbReference type="SUPFAM" id="SSF53383">
    <property type="entry name" value="PLP-dependent transferases"/>
    <property type="match status" value="1"/>
</dbReference>
<dbReference type="PROSITE" id="PS00595">
    <property type="entry name" value="AA_TRANSFER_CLASS_5"/>
    <property type="match status" value="1"/>
</dbReference>